<comment type="function">
    <text evidence="1">Catalyzes the specific phosphorylation of the 3-hydroxyl group of shikimic acid using ATP as a cosubstrate.</text>
</comment>
<comment type="catalytic activity">
    <reaction evidence="1">
        <text>shikimate + ATP = 3-phosphoshikimate + ADP + H(+)</text>
        <dbReference type="Rhea" id="RHEA:13121"/>
        <dbReference type="ChEBI" id="CHEBI:15378"/>
        <dbReference type="ChEBI" id="CHEBI:30616"/>
        <dbReference type="ChEBI" id="CHEBI:36208"/>
        <dbReference type="ChEBI" id="CHEBI:145989"/>
        <dbReference type="ChEBI" id="CHEBI:456216"/>
        <dbReference type="EC" id="2.7.1.71"/>
    </reaction>
</comment>
<comment type="cofactor">
    <cofactor evidence="1">
        <name>Mg(2+)</name>
        <dbReference type="ChEBI" id="CHEBI:18420"/>
    </cofactor>
    <text evidence="1">Binds 1 Mg(2+) ion per subunit.</text>
</comment>
<comment type="pathway">
    <text evidence="1">Metabolic intermediate biosynthesis; chorismate biosynthesis; chorismate from D-erythrose 4-phosphate and phosphoenolpyruvate: step 5/7.</text>
</comment>
<comment type="subunit">
    <text evidence="1">Monomer.</text>
</comment>
<comment type="subcellular location">
    <subcellularLocation>
        <location evidence="1">Cytoplasm</location>
    </subcellularLocation>
</comment>
<comment type="similarity">
    <text evidence="1">Belongs to the shikimate kinase family.</text>
</comment>
<organism>
    <name type="scientific">Citrobacter koseri (strain ATCC BAA-895 / CDC 4225-83 / SGSC4696)</name>
    <dbReference type="NCBI Taxonomy" id="290338"/>
    <lineage>
        <taxon>Bacteria</taxon>
        <taxon>Pseudomonadati</taxon>
        <taxon>Pseudomonadota</taxon>
        <taxon>Gammaproteobacteria</taxon>
        <taxon>Enterobacterales</taxon>
        <taxon>Enterobacteriaceae</taxon>
        <taxon>Citrobacter</taxon>
    </lineage>
</organism>
<evidence type="ECO:0000255" key="1">
    <source>
        <dbReference type="HAMAP-Rule" id="MF_00109"/>
    </source>
</evidence>
<feature type="chain" id="PRO_1000022967" description="Shikimate kinase 1">
    <location>
        <begin position="1"/>
        <end position="173"/>
    </location>
</feature>
<feature type="binding site" evidence="1">
    <location>
        <begin position="14"/>
        <end position="19"/>
    </location>
    <ligand>
        <name>ATP</name>
        <dbReference type="ChEBI" id="CHEBI:30616"/>
    </ligand>
</feature>
<feature type="binding site" evidence="1">
    <location>
        <position position="18"/>
    </location>
    <ligand>
        <name>Mg(2+)</name>
        <dbReference type="ChEBI" id="CHEBI:18420"/>
    </ligand>
</feature>
<feature type="binding site" evidence="1">
    <location>
        <position position="36"/>
    </location>
    <ligand>
        <name>substrate</name>
    </ligand>
</feature>
<feature type="binding site" evidence="1">
    <location>
        <position position="60"/>
    </location>
    <ligand>
        <name>substrate</name>
    </ligand>
</feature>
<feature type="binding site" evidence="1">
    <location>
        <position position="82"/>
    </location>
    <ligand>
        <name>substrate</name>
    </ligand>
</feature>
<feature type="binding site" evidence="1">
    <location>
        <position position="120"/>
    </location>
    <ligand>
        <name>ATP</name>
        <dbReference type="ChEBI" id="CHEBI:30616"/>
    </ligand>
</feature>
<feature type="binding site" evidence="1">
    <location>
        <position position="140"/>
    </location>
    <ligand>
        <name>substrate</name>
    </ligand>
</feature>
<feature type="binding site" evidence="1">
    <location>
        <position position="157"/>
    </location>
    <ligand>
        <name>ATP</name>
        <dbReference type="ChEBI" id="CHEBI:30616"/>
    </ligand>
</feature>
<reference key="1">
    <citation type="submission" date="2007-08" db="EMBL/GenBank/DDBJ databases">
        <authorList>
            <consortium name="The Citrobacter koseri Genome Sequencing Project"/>
            <person name="McClelland M."/>
            <person name="Sanderson E.K."/>
            <person name="Porwollik S."/>
            <person name="Spieth J."/>
            <person name="Clifton W.S."/>
            <person name="Latreille P."/>
            <person name="Courtney L."/>
            <person name="Wang C."/>
            <person name="Pepin K."/>
            <person name="Bhonagiri V."/>
            <person name="Nash W."/>
            <person name="Johnson M."/>
            <person name="Thiruvilangam P."/>
            <person name="Wilson R."/>
        </authorList>
    </citation>
    <scope>NUCLEOTIDE SEQUENCE [LARGE SCALE GENOMIC DNA]</scope>
    <source>
        <strain>ATCC BAA-895 / CDC 4225-83 / SGSC4696</strain>
    </source>
</reference>
<dbReference type="EC" id="2.7.1.71" evidence="1"/>
<dbReference type="EMBL" id="CP000822">
    <property type="protein sequence ID" value="ABV15857.1"/>
    <property type="molecule type" value="Genomic_DNA"/>
</dbReference>
<dbReference type="RefSeq" id="WP_012135498.1">
    <property type="nucleotide sequence ID" value="NC_009792.1"/>
</dbReference>
<dbReference type="SMR" id="A8AQU4"/>
<dbReference type="STRING" id="290338.CKO_04812"/>
<dbReference type="GeneID" id="45138313"/>
<dbReference type="KEGG" id="cko:CKO_04812"/>
<dbReference type="HOGENOM" id="CLU_057607_2_2_6"/>
<dbReference type="OrthoDB" id="9800332at2"/>
<dbReference type="UniPathway" id="UPA00053">
    <property type="reaction ID" value="UER00088"/>
</dbReference>
<dbReference type="Proteomes" id="UP000008148">
    <property type="component" value="Chromosome"/>
</dbReference>
<dbReference type="GO" id="GO:0005829">
    <property type="term" value="C:cytosol"/>
    <property type="evidence" value="ECO:0007669"/>
    <property type="project" value="TreeGrafter"/>
</dbReference>
<dbReference type="GO" id="GO:0005524">
    <property type="term" value="F:ATP binding"/>
    <property type="evidence" value="ECO:0007669"/>
    <property type="project" value="UniProtKB-UniRule"/>
</dbReference>
<dbReference type="GO" id="GO:0000287">
    <property type="term" value="F:magnesium ion binding"/>
    <property type="evidence" value="ECO:0007669"/>
    <property type="project" value="UniProtKB-UniRule"/>
</dbReference>
<dbReference type="GO" id="GO:0004765">
    <property type="term" value="F:shikimate kinase activity"/>
    <property type="evidence" value="ECO:0007669"/>
    <property type="project" value="UniProtKB-UniRule"/>
</dbReference>
<dbReference type="GO" id="GO:0008652">
    <property type="term" value="P:amino acid biosynthetic process"/>
    <property type="evidence" value="ECO:0007669"/>
    <property type="project" value="UniProtKB-KW"/>
</dbReference>
<dbReference type="GO" id="GO:0009073">
    <property type="term" value="P:aromatic amino acid family biosynthetic process"/>
    <property type="evidence" value="ECO:0007669"/>
    <property type="project" value="UniProtKB-KW"/>
</dbReference>
<dbReference type="GO" id="GO:0009423">
    <property type="term" value="P:chorismate biosynthetic process"/>
    <property type="evidence" value="ECO:0007669"/>
    <property type="project" value="UniProtKB-UniRule"/>
</dbReference>
<dbReference type="CDD" id="cd00464">
    <property type="entry name" value="SK"/>
    <property type="match status" value="1"/>
</dbReference>
<dbReference type="FunFam" id="3.40.50.300:FF:000099">
    <property type="entry name" value="Shikimate kinase 1"/>
    <property type="match status" value="1"/>
</dbReference>
<dbReference type="Gene3D" id="3.40.50.300">
    <property type="entry name" value="P-loop containing nucleotide triphosphate hydrolases"/>
    <property type="match status" value="1"/>
</dbReference>
<dbReference type="HAMAP" id="MF_00109">
    <property type="entry name" value="Shikimate_kinase"/>
    <property type="match status" value="1"/>
</dbReference>
<dbReference type="InterPro" id="IPR027417">
    <property type="entry name" value="P-loop_NTPase"/>
</dbReference>
<dbReference type="InterPro" id="IPR031322">
    <property type="entry name" value="Shikimate/glucono_kinase"/>
</dbReference>
<dbReference type="InterPro" id="IPR000623">
    <property type="entry name" value="Shikimate_kinase/TSH1"/>
</dbReference>
<dbReference type="InterPro" id="IPR023000">
    <property type="entry name" value="Shikimate_kinase_CS"/>
</dbReference>
<dbReference type="NCBIfam" id="NF003456">
    <property type="entry name" value="PRK05057.1"/>
    <property type="match status" value="1"/>
</dbReference>
<dbReference type="PANTHER" id="PTHR21087">
    <property type="entry name" value="SHIKIMATE KINASE"/>
    <property type="match status" value="1"/>
</dbReference>
<dbReference type="PANTHER" id="PTHR21087:SF16">
    <property type="entry name" value="SHIKIMATE KINASE 1, CHLOROPLASTIC"/>
    <property type="match status" value="1"/>
</dbReference>
<dbReference type="Pfam" id="PF01202">
    <property type="entry name" value="SKI"/>
    <property type="match status" value="1"/>
</dbReference>
<dbReference type="PRINTS" id="PR01100">
    <property type="entry name" value="SHIKIMTKNASE"/>
</dbReference>
<dbReference type="SUPFAM" id="SSF52540">
    <property type="entry name" value="P-loop containing nucleoside triphosphate hydrolases"/>
    <property type="match status" value="1"/>
</dbReference>
<dbReference type="PROSITE" id="PS01128">
    <property type="entry name" value="SHIKIMATE_KINASE"/>
    <property type="match status" value="1"/>
</dbReference>
<proteinExistence type="inferred from homology"/>
<sequence>MAEKRNIFLVGPMGAGKSTIGRQLAQQLNMEFYDSDQEIEKRTGADVGWVFDVEGEDGFRDREEKVINELTEKQGIVLATGGGSVKSRETRNRLSARGVVVYLETTIEKQLARTQRDKKRPLLQVEAPPREVLEALANERNPLYEEIADVTIRTDDQSAKVVANQIIHMLESN</sequence>
<gene>
    <name evidence="1" type="primary">aroK</name>
    <name type="ordered locus">CKO_04812</name>
</gene>
<protein>
    <recommendedName>
        <fullName evidence="1">Shikimate kinase 1</fullName>
        <shortName evidence="1">SK 1</shortName>
        <ecNumber evidence="1">2.7.1.71</ecNumber>
    </recommendedName>
</protein>
<name>AROK_CITK8</name>
<accession>A8AQU4</accession>
<keyword id="KW-0028">Amino-acid biosynthesis</keyword>
<keyword id="KW-0057">Aromatic amino acid biosynthesis</keyword>
<keyword id="KW-0067">ATP-binding</keyword>
<keyword id="KW-0963">Cytoplasm</keyword>
<keyword id="KW-0418">Kinase</keyword>
<keyword id="KW-0460">Magnesium</keyword>
<keyword id="KW-0479">Metal-binding</keyword>
<keyword id="KW-0547">Nucleotide-binding</keyword>
<keyword id="KW-1185">Reference proteome</keyword>
<keyword id="KW-0808">Transferase</keyword>